<feature type="chain" id="PRO_0000423964" description="F(420)H(2) dehydrogenase subunit D">
    <location>
        <begin position="1"/>
        <end position="374"/>
    </location>
</feature>
<evidence type="ECO:0000250" key="1"/>
<evidence type="ECO:0000269" key="2">
    <source>
    </source>
</evidence>
<evidence type="ECO:0000269" key="3">
    <source ref="1"/>
</evidence>
<evidence type="ECO:0000305" key="4"/>
<keyword id="KW-0997">Cell inner membrane</keyword>
<keyword id="KW-1003">Cell membrane</keyword>
<keyword id="KW-0903">Direct protein sequencing</keyword>
<keyword id="KW-0249">Electron transport</keyword>
<keyword id="KW-0472">Membrane</keyword>
<keyword id="KW-0484">Methanogenesis</keyword>
<keyword id="KW-0485">Methanol utilization</keyword>
<keyword id="KW-0560">Oxidoreductase</keyword>
<keyword id="KW-0813">Transport</keyword>
<sequence length="374" mass="42492">MEEMLESNEMIVHLGPQHPMQPGPFRLNLKLKGETIMDAEVEMGYIHKGIEKILENRTYLQGITIVDRICYLVALTNEECYVGCVEKLLDIEPPERAQYIRVILEELSRLQSHLLGLGEYGEFIGFVSMFMYTIKEREDILTLIDMVTGARVTHSYLRFGGVRDDLPEGFKEKTIPVLNKLKKVIRDYEEMFYSDTIYRERTIGIGVLTADEAKSLGVSGPVLRATGVPFDIRKNEPYLVYRDLDFKVCTETAGDCFARVQVRLNEMRESIYIIEQCLDMIPNGPIFPEGTPYGKRTPVMRVPAGEVFHRVEDPRGEMGMYMVSDGSDRPYRVKVRGPYYPTLQALPPLIIGTTVADMVSISGSMDGCTSEVDR</sequence>
<organism>
    <name type="scientific">Methanosarcina mazei (strain ATCC BAA-159 / DSM 3647 / Goe1 / Go1 / JCM 11833 / OCM 88)</name>
    <name type="common">Methanosarcina frisia</name>
    <dbReference type="NCBI Taxonomy" id="192952"/>
    <lineage>
        <taxon>Archaea</taxon>
        <taxon>Methanobacteriati</taxon>
        <taxon>Methanobacteriota</taxon>
        <taxon>Stenosarchaea group</taxon>
        <taxon>Methanomicrobia</taxon>
        <taxon>Methanosarcinales</taxon>
        <taxon>Methanosarcinaceae</taxon>
        <taxon>Methanosarcina</taxon>
    </lineage>
</organism>
<dbReference type="EC" id="1.5.98.3" evidence="3"/>
<dbReference type="EMBL" id="AF228525">
    <property type="protein sequence ID" value="AAF65734.1"/>
    <property type="molecule type" value="Genomic_DNA"/>
</dbReference>
<dbReference type="EMBL" id="AE008384">
    <property type="protein sequence ID" value="AAM32184.1"/>
    <property type="molecule type" value="Genomic_DNA"/>
</dbReference>
<dbReference type="RefSeq" id="WP_011034406.1">
    <property type="nucleotide sequence ID" value="NC_003901.1"/>
</dbReference>
<dbReference type="SMR" id="F1SVE4"/>
<dbReference type="TCDB" id="3.D.9.1.1">
    <property type="family name" value="the h(+)-translocating f420h2 dehydrogenase (f420h2dh) family"/>
</dbReference>
<dbReference type="GeneID" id="82161564"/>
<dbReference type="KEGG" id="mma:MM_2488"/>
<dbReference type="PATRIC" id="fig|192952.21.peg.2847"/>
<dbReference type="eggNOG" id="arCOG01548">
    <property type="taxonomic scope" value="Archaea"/>
</dbReference>
<dbReference type="HOGENOM" id="CLU_015134_1_2_2"/>
<dbReference type="BioCyc" id="MetaCyc:MONOMER-12223"/>
<dbReference type="BRENDA" id="1.12.98.3">
    <property type="organism ID" value="3270"/>
</dbReference>
<dbReference type="Proteomes" id="UP000000595">
    <property type="component" value="Chromosome"/>
</dbReference>
<dbReference type="GO" id="GO:0005886">
    <property type="term" value="C:plasma membrane"/>
    <property type="evidence" value="ECO:0007669"/>
    <property type="project" value="UniProtKB-SubCell"/>
</dbReference>
<dbReference type="GO" id="GO:0051911">
    <property type="term" value="F:Methanosarcina-phenazine hydrogenase activity"/>
    <property type="evidence" value="ECO:0007669"/>
    <property type="project" value="UniProtKB-EC"/>
</dbReference>
<dbReference type="GO" id="GO:0051287">
    <property type="term" value="F:NAD binding"/>
    <property type="evidence" value="ECO:0007669"/>
    <property type="project" value="InterPro"/>
</dbReference>
<dbReference type="GO" id="GO:0016151">
    <property type="term" value="F:nickel cation binding"/>
    <property type="evidence" value="ECO:0007669"/>
    <property type="project" value="InterPro"/>
</dbReference>
<dbReference type="GO" id="GO:0016651">
    <property type="term" value="F:oxidoreductase activity, acting on NAD(P)H"/>
    <property type="evidence" value="ECO:0007669"/>
    <property type="project" value="InterPro"/>
</dbReference>
<dbReference type="GO" id="GO:0048038">
    <property type="term" value="F:quinone binding"/>
    <property type="evidence" value="ECO:0007669"/>
    <property type="project" value="InterPro"/>
</dbReference>
<dbReference type="GO" id="GO:0043738">
    <property type="term" value="F:reduced coenzyme F420 dehydrogenase activity"/>
    <property type="evidence" value="ECO:0007669"/>
    <property type="project" value="RHEA"/>
</dbReference>
<dbReference type="GO" id="GO:0015948">
    <property type="term" value="P:methanogenesis"/>
    <property type="evidence" value="ECO:0007669"/>
    <property type="project" value="UniProtKB-KW"/>
</dbReference>
<dbReference type="GO" id="GO:0015945">
    <property type="term" value="P:methanol metabolic process"/>
    <property type="evidence" value="ECO:0007669"/>
    <property type="project" value="UniProtKB-KW"/>
</dbReference>
<dbReference type="Gene3D" id="1.10.645.10">
    <property type="entry name" value="Cytochrome-c3 Hydrogenase, chain B"/>
    <property type="match status" value="1"/>
</dbReference>
<dbReference type="HAMAP" id="MF_01358">
    <property type="entry name" value="NDH1_NuoD"/>
    <property type="match status" value="1"/>
</dbReference>
<dbReference type="InterPro" id="IPR054914">
    <property type="entry name" value="F420_dehyd_FpoD"/>
</dbReference>
<dbReference type="InterPro" id="IPR001135">
    <property type="entry name" value="NADH_Q_OxRdtase_suD"/>
</dbReference>
<dbReference type="InterPro" id="IPR022885">
    <property type="entry name" value="NDH1_su_D/H"/>
</dbReference>
<dbReference type="InterPro" id="IPR001501">
    <property type="entry name" value="Ni-dep_hyd_lsu"/>
</dbReference>
<dbReference type="InterPro" id="IPR029014">
    <property type="entry name" value="NiFe-Hase_large"/>
</dbReference>
<dbReference type="NCBIfam" id="NF040602">
    <property type="entry name" value="F420_dehyd_FpoD"/>
    <property type="match status" value="1"/>
</dbReference>
<dbReference type="NCBIfam" id="NF004739">
    <property type="entry name" value="PRK06075.1"/>
    <property type="match status" value="1"/>
</dbReference>
<dbReference type="PANTHER" id="PTHR11993:SF10">
    <property type="entry name" value="NADH DEHYDROGENASE [UBIQUINONE] IRON-SULFUR PROTEIN 2, MITOCHONDRIAL"/>
    <property type="match status" value="1"/>
</dbReference>
<dbReference type="PANTHER" id="PTHR11993">
    <property type="entry name" value="NADH-UBIQUINONE OXIDOREDUCTASE 49 KDA SUBUNIT"/>
    <property type="match status" value="1"/>
</dbReference>
<dbReference type="Pfam" id="PF00346">
    <property type="entry name" value="Complex1_49kDa"/>
    <property type="match status" value="2"/>
</dbReference>
<dbReference type="Pfam" id="PF00374">
    <property type="entry name" value="NiFeSe_Hases"/>
    <property type="match status" value="1"/>
</dbReference>
<dbReference type="SUPFAM" id="SSF56762">
    <property type="entry name" value="HydB/Nqo4-like"/>
    <property type="match status" value="1"/>
</dbReference>
<protein>
    <recommendedName>
        <fullName>F(420)H(2) dehydrogenase subunit D</fullName>
        <ecNumber evidence="3">1.5.98.3</ecNumber>
    </recommendedName>
    <alternativeName>
        <fullName>F(420)H(2)-dependent phenazine dehydrogenase subunit D</fullName>
    </alternativeName>
    <alternativeName>
        <fullName>F(420)H(2)-dependent phenazine oxidoreductase subunit D</fullName>
        <shortName>FPO subunit D</shortName>
    </alternativeName>
    <alternativeName>
        <fullName>Methanophenazine hydrogenase subunit D</fullName>
    </alternativeName>
    <alternativeName>
        <fullName>Methanosarcina-phenazine hydrogenase subunit D</fullName>
    </alternativeName>
</protein>
<gene>
    <name type="primary">fpoD</name>
    <name type="ordered locus">MM_2488</name>
</gene>
<comment type="function">
    <text evidence="2 3">Component of the F(420)H(2) dehydrogenase (FPO complex) which is part of the energy-conserving F(420)H(2):heterodisulfide oxidoreductase system. The membrane-bound electron transfer system of the complex plays an important role in the metabolism of methylotrophic methanogens when the organisms grow on methanol or methylamines. Catalyzes the oxidation of methanophenazine to dihydromethanophenazine. It shuttles electrons from F(420)H(2), via FAD and iron-sulfur (Fe-S) centers, to methanophenazine (an electron carrier in the membrane). It couples the redox reaction to proton translocation (for every two electrons transferred, two hydrogen ions are translocated across the cytoplasmic membrane), and thus conserves the redox energy in a proton gradient. It also catalyzes the oxidation of F(420)H(2) with quinones such as 2,3-dimethyl-1,4-naphthoquinone, 2-methyl-1,4-naphthoquinone and tetramethyl-p-benzoquinone.</text>
</comment>
<comment type="catalytic activity">
    <reaction evidence="3">
        <text>methanophenazine + reduced coenzyme F420-(gamma-L-Glu)(n) = dihydromethanophenazine + oxidized coenzyme F420-(gamma-L-Glu)(n) + H(+)</text>
        <dbReference type="Rhea" id="RHEA:54752"/>
        <dbReference type="Rhea" id="RHEA-COMP:12939"/>
        <dbReference type="Rhea" id="RHEA-COMP:14378"/>
        <dbReference type="ChEBI" id="CHEBI:15378"/>
        <dbReference type="ChEBI" id="CHEBI:29118"/>
        <dbReference type="ChEBI" id="CHEBI:50375"/>
        <dbReference type="ChEBI" id="CHEBI:133980"/>
        <dbReference type="ChEBI" id="CHEBI:139511"/>
        <dbReference type="EC" id="1.5.98.3"/>
    </reaction>
</comment>
<comment type="biophysicochemical properties">
    <kinetics>
        <KM evidence="3">7 uM for F(420)H(2) (at 37 degrees Celsius and pH 7)</KM>
        <Vmax evidence="3">17.0 umol/min/mg enzyme (at 37 degrees Celsius and pH 7)</Vmax>
        <text>Measured for the whole complex.</text>
    </kinetics>
    <phDependence>
        <text evidence="3">Optimum pH is 8.5.</text>
    </phDependence>
    <temperatureDependence>
        <text evidence="3">Optimum temperature is 39 degrees Celsius.</text>
    </temperatureDependence>
</comment>
<comment type="subunit">
    <text evidence="2">The FPO complex is composed of at least 13 different subunits.</text>
</comment>
<comment type="subcellular location">
    <subcellularLocation>
        <location evidence="1">Cell inner membrane</location>
        <topology evidence="1">Peripheral membrane protein</topology>
        <orientation evidence="1">Cytoplasmic side</orientation>
    </subcellularLocation>
</comment>
<comment type="similarity">
    <text evidence="4">Belongs to the complex I 49 kDa subunit family.</text>
</comment>
<accession>F1SVE4</accession>
<accession>Q7LWJ7</accession>
<accession>Q9P9G0</accession>
<reference key="1">
    <citation type="journal article" date="1997" name="FEMS Microbiol. Lett.">
        <title>Purification and properties of an F420H2 dehydrogenase from Methanosarcina mazei Go1.</title>
        <authorList>
            <person name="Abken H.-J."/>
            <person name="Deppenmeier U."/>
        </authorList>
    </citation>
    <scope>NUCLEOTIDE SEQUENCE [GENOMIC DNA]</scope>
    <scope>FUNCTION</scope>
    <scope>CATALYTIC ACTIVITY</scope>
    <scope>BIOPHYSICOCHEMICAL PROPERTIES</scope>
    <scope>SUBSTRATE SPECIFICITY</scope>
    <source>
        <strain>ATCC BAA-159 / DSM 3647 / Goe1 / Go1 / JCM 11833 / OCM 88</strain>
    </source>
</reference>
<reference key="2">
    <citation type="journal article" date="2000" name="J. Biol. Chem.">
        <title>The F420H2 dehydrogenase from Methanosarcina mazei is a Redox-driven proton pump closely related to NADH dehydrogenases.</title>
        <authorList>
            <person name="Baumer S."/>
            <person name="Ide T."/>
            <person name="Jacobi C."/>
            <person name="Johann A."/>
            <person name="Gottschalk G."/>
            <person name="Deppenmeier U."/>
        </authorList>
    </citation>
    <scope>NUCLEOTIDE SEQUENCE [GENOMIC DNA]</scope>
    <scope>PROTEIN SEQUENCE</scope>
    <scope>FUNCTION IN THE PROTON TRANSLOCATION</scope>
    <scope>SUBUNIT</scope>
    <scope>NOMENCLATURE</scope>
    <source>
        <strain>ATCC BAA-159 / DSM 3647 / Goe1 / Go1 / JCM 11833 / OCM 88</strain>
    </source>
</reference>
<reference key="3">
    <citation type="journal article" date="2002" name="J. Mol. Microbiol. Biotechnol.">
        <title>The genome of Methanosarcina mazei: evidence for lateral gene transfer between Bacteria and Archaea.</title>
        <authorList>
            <person name="Deppenmeier U."/>
            <person name="Johann A."/>
            <person name="Hartsch T."/>
            <person name="Merkl R."/>
            <person name="Schmitz R.A."/>
            <person name="Martinez-Arias R."/>
            <person name="Henne A."/>
            <person name="Wiezer A."/>
            <person name="Baeumer S."/>
            <person name="Jacobi C."/>
            <person name="Brueggemann H."/>
            <person name="Lienard T."/>
            <person name="Christmann A."/>
            <person name="Boemecke M."/>
            <person name="Steckel S."/>
            <person name="Bhattacharyya A."/>
            <person name="Lykidis A."/>
            <person name="Overbeek R."/>
            <person name="Klenk H.-P."/>
            <person name="Gunsalus R.P."/>
            <person name="Fritz H.-J."/>
            <person name="Gottschalk G."/>
        </authorList>
    </citation>
    <scope>NUCLEOTIDE SEQUENCE [LARGE SCALE GENOMIC DNA]</scope>
    <source>
        <strain>ATCC BAA-159 / DSM 3647 / Goe1 / Go1 / JCM 11833 / OCM 88</strain>
    </source>
</reference>
<proteinExistence type="evidence at protein level"/>
<name>FPOD_METMA</name>